<proteinExistence type="inferred from homology"/>
<gene>
    <name evidence="1" type="primary">mraZ</name>
    <name type="ordered locus">CGSHiGG_09300</name>
</gene>
<feature type="chain" id="PRO_1000062879" description="Transcriptional regulator MraZ">
    <location>
        <begin position="1"/>
        <end position="151"/>
    </location>
</feature>
<feature type="domain" description="SpoVT-AbrB 1" evidence="2">
    <location>
        <begin position="5"/>
        <end position="52"/>
    </location>
</feature>
<feature type="domain" description="SpoVT-AbrB 2" evidence="2">
    <location>
        <begin position="81"/>
        <end position="124"/>
    </location>
</feature>
<reference key="1">
    <citation type="journal article" date="2007" name="Genome Biol.">
        <title>Characterization and modeling of the Haemophilus influenzae core and supragenomes based on the complete genomic sequences of Rd and 12 clinical nontypeable strains.</title>
        <authorList>
            <person name="Hogg J.S."/>
            <person name="Hu F.Z."/>
            <person name="Janto B."/>
            <person name="Boissy R."/>
            <person name="Hayes J."/>
            <person name="Keefe R."/>
            <person name="Post J.C."/>
            <person name="Ehrlich G.D."/>
        </authorList>
    </citation>
    <scope>NUCLEOTIDE SEQUENCE [LARGE SCALE GENOMIC DNA]</scope>
    <source>
        <strain>PittGG</strain>
    </source>
</reference>
<accession>A5UIQ2</accession>
<sequence length="151" mass="17006">MFRGATAVNLDSKGRVAIPTRYRAEILEKNQGKMVCTVDIRQPCLLLYPLMNGKKSNKKLLALSNFDPTQRRLQRVMLGHATECEMDAQGRILFSGPLRQHAKLEKGLMLVGQLNKFEIWSDVEWHTQIAEDIEIGSSADFAADALNDFSL</sequence>
<evidence type="ECO:0000255" key="1">
    <source>
        <dbReference type="HAMAP-Rule" id="MF_01008"/>
    </source>
</evidence>
<evidence type="ECO:0000255" key="2">
    <source>
        <dbReference type="PROSITE-ProRule" id="PRU01076"/>
    </source>
</evidence>
<organism>
    <name type="scientific">Haemophilus influenzae (strain PittGG)</name>
    <dbReference type="NCBI Taxonomy" id="374931"/>
    <lineage>
        <taxon>Bacteria</taxon>
        <taxon>Pseudomonadati</taxon>
        <taxon>Pseudomonadota</taxon>
        <taxon>Gammaproteobacteria</taxon>
        <taxon>Pasteurellales</taxon>
        <taxon>Pasteurellaceae</taxon>
        <taxon>Haemophilus</taxon>
    </lineage>
</organism>
<comment type="subunit">
    <text evidence="1">Forms oligomers.</text>
</comment>
<comment type="subcellular location">
    <subcellularLocation>
        <location evidence="1">Cytoplasm</location>
        <location evidence="1">Nucleoid</location>
    </subcellularLocation>
</comment>
<comment type="similarity">
    <text evidence="1">Belongs to the MraZ family.</text>
</comment>
<name>MRAZ_HAEIG</name>
<dbReference type="EMBL" id="CP000672">
    <property type="protein sequence ID" value="ABR00658.1"/>
    <property type="molecule type" value="Genomic_DNA"/>
</dbReference>
<dbReference type="SMR" id="A5UIQ2"/>
<dbReference type="KEGG" id="hiq:CGSHiGG_09300"/>
<dbReference type="HOGENOM" id="CLU_107907_2_0_6"/>
<dbReference type="Proteomes" id="UP000001990">
    <property type="component" value="Chromosome"/>
</dbReference>
<dbReference type="GO" id="GO:0005737">
    <property type="term" value="C:cytoplasm"/>
    <property type="evidence" value="ECO:0007669"/>
    <property type="project" value="UniProtKB-UniRule"/>
</dbReference>
<dbReference type="GO" id="GO:0009295">
    <property type="term" value="C:nucleoid"/>
    <property type="evidence" value="ECO:0007669"/>
    <property type="project" value="UniProtKB-SubCell"/>
</dbReference>
<dbReference type="GO" id="GO:0003700">
    <property type="term" value="F:DNA-binding transcription factor activity"/>
    <property type="evidence" value="ECO:0007669"/>
    <property type="project" value="UniProtKB-UniRule"/>
</dbReference>
<dbReference type="GO" id="GO:0000976">
    <property type="term" value="F:transcription cis-regulatory region binding"/>
    <property type="evidence" value="ECO:0007669"/>
    <property type="project" value="TreeGrafter"/>
</dbReference>
<dbReference type="GO" id="GO:2000143">
    <property type="term" value="P:negative regulation of DNA-templated transcription initiation"/>
    <property type="evidence" value="ECO:0007669"/>
    <property type="project" value="TreeGrafter"/>
</dbReference>
<dbReference type="CDD" id="cd16321">
    <property type="entry name" value="MraZ_C"/>
    <property type="match status" value="1"/>
</dbReference>
<dbReference type="CDD" id="cd16320">
    <property type="entry name" value="MraZ_N"/>
    <property type="match status" value="1"/>
</dbReference>
<dbReference type="FunFam" id="3.40.1550.20:FF:000001">
    <property type="entry name" value="Transcriptional regulator MraZ"/>
    <property type="match status" value="1"/>
</dbReference>
<dbReference type="Gene3D" id="3.40.1550.20">
    <property type="entry name" value="Transcriptional regulator MraZ domain"/>
    <property type="match status" value="1"/>
</dbReference>
<dbReference type="HAMAP" id="MF_01008">
    <property type="entry name" value="MraZ"/>
    <property type="match status" value="1"/>
</dbReference>
<dbReference type="InterPro" id="IPR003444">
    <property type="entry name" value="MraZ"/>
</dbReference>
<dbReference type="InterPro" id="IPR035644">
    <property type="entry name" value="MraZ_C"/>
</dbReference>
<dbReference type="InterPro" id="IPR020603">
    <property type="entry name" value="MraZ_dom"/>
</dbReference>
<dbReference type="InterPro" id="IPR035642">
    <property type="entry name" value="MraZ_N"/>
</dbReference>
<dbReference type="InterPro" id="IPR038619">
    <property type="entry name" value="MraZ_sf"/>
</dbReference>
<dbReference type="InterPro" id="IPR007159">
    <property type="entry name" value="SpoVT-AbrB_dom"/>
</dbReference>
<dbReference type="InterPro" id="IPR037914">
    <property type="entry name" value="SpoVT-AbrB_sf"/>
</dbReference>
<dbReference type="NCBIfam" id="TIGR00242">
    <property type="entry name" value="division/cell wall cluster transcriptional repressor MraZ"/>
    <property type="match status" value="1"/>
</dbReference>
<dbReference type="PANTHER" id="PTHR34701">
    <property type="entry name" value="TRANSCRIPTIONAL REGULATOR MRAZ"/>
    <property type="match status" value="1"/>
</dbReference>
<dbReference type="PANTHER" id="PTHR34701:SF1">
    <property type="entry name" value="TRANSCRIPTIONAL REGULATOR MRAZ"/>
    <property type="match status" value="1"/>
</dbReference>
<dbReference type="Pfam" id="PF02381">
    <property type="entry name" value="MraZ"/>
    <property type="match status" value="2"/>
</dbReference>
<dbReference type="SUPFAM" id="SSF89447">
    <property type="entry name" value="AbrB/MazE/MraZ-like"/>
    <property type="match status" value="1"/>
</dbReference>
<dbReference type="PROSITE" id="PS51740">
    <property type="entry name" value="SPOVT_ABRB"/>
    <property type="match status" value="2"/>
</dbReference>
<keyword id="KW-0963">Cytoplasm</keyword>
<keyword id="KW-0238">DNA-binding</keyword>
<keyword id="KW-0677">Repeat</keyword>
<keyword id="KW-0804">Transcription</keyword>
<keyword id="KW-0805">Transcription regulation</keyword>
<protein>
    <recommendedName>
        <fullName>Transcriptional regulator MraZ</fullName>
    </recommendedName>
</protein>